<reference key="1">
    <citation type="journal article" date="2006" name="Genome Res.">
        <title>Skewed genomic variability in strains of the toxigenic bacterial pathogen, Clostridium perfringens.</title>
        <authorList>
            <person name="Myers G.S.A."/>
            <person name="Rasko D.A."/>
            <person name="Cheung J.K."/>
            <person name="Ravel J."/>
            <person name="Seshadri R."/>
            <person name="DeBoy R.T."/>
            <person name="Ren Q."/>
            <person name="Varga J."/>
            <person name="Awad M.M."/>
            <person name="Brinkac L.M."/>
            <person name="Daugherty S.C."/>
            <person name="Haft D.H."/>
            <person name="Dodson R.J."/>
            <person name="Madupu R."/>
            <person name="Nelson W.C."/>
            <person name="Rosovitz M.J."/>
            <person name="Sullivan S.A."/>
            <person name="Khouri H."/>
            <person name="Dimitrov G.I."/>
            <person name="Watkins K.L."/>
            <person name="Mulligan S."/>
            <person name="Benton J."/>
            <person name="Radune D."/>
            <person name="Fisher D.J."/>
            <person name="Atkins H.S."/>
            <person name="Hiscox T."/>
            <person name="Jost B.H."/>
            <person name="Billington S.J."/>
            <person name="Songer J.G."/>
            <person name="McClane B.A."/>
            <person name="Titball R.W."/>
            <person name="Rood J.I."/>
            <person name="Melville S.B."/>
            <person name="Paulsen I.T."/>
        </authorList>
    </citation>
    <scope>NUCLEOTIDE SEQUENCE [LARGE SCALE GENOMIC DNA]</scope>
    <source>
        <strain>ATCC 13124 / DSM 756 / JCM 1290 / NCIMB 6125 / NCTC 8237 / S 107 / Type A</strain>
    </source>
</reference>
<proteinExistence type="inferred from homology"/>
<protein>
    <recommendedName>
        <fullName evidence="1">Elongation factor P</fullName>
        <shortName evidence="1">EF-P</shortName>
    </recommendedName>
</protein>
<comment type="function">
    <text evidence="1">Involved in peptide bond synthesis. Stimulates efficient translation and peptide-bond synthesis on native or reconstituted 70S ribosomes in vitro. Probably functions indirectly by altering the affinity of the ribosome for aminoacyl-tRNA, thus increasing their reactivity as acceptors for peptidyl transferase.</text>
</comment>
<comment type="pathway">
    <text evidence="1">Protein biosynthesis; polypeptide chain elongation.</text>
</comment>
<comment type="subcellular location">
    <subcellularLocation>
        <location evidence="1">Cytoplasm</location>
    </subcellularLocation>
</comment>
<comment type="similarity">
    <text evidence="1">Belongs to the elongation factor P family.</text>
</comment>
<feature type="chain" id="PRO_1000010722" description="Elongation factor P">
    <location>
        <begin position="1"/>
        <end position="185"/>
    </location>
</feature>
<sequence>MISGSDLRKGTTFELDGQVYTVIDFLHVKPGKGAAFVRTKLRNVIMGGVTDRTFNPTDKLQEAIIERKEMQYLYSDGELYYFMDQETFEQIPLNHEKVEDAIKFLKENMNAVIKFYKGEAFSVEAPNFVELLITECEPSVKGNTATTAMKTAVVETGATVMVPMFVEEGNTIRIDTRTGEYMERV</sequence>
<organism>
    <name type="scientific">Clostridium perfringens (strain ATCC 13124 / DSM 756 / JCM 1290 / NCIMB 6125 / NCTC 8237 / Type A)</name>
    <dbReference type="NCBI Taxonomy" id="195103"/>
    <lineage>
        <taxon>Bacteria</taxon>
        <taxon>Bacillati</taxon>
        <taxon>Bacillota</taxon>
        <taxon>Clostridia</taxon>
        <taxon>Eubacteriales</taxon>
        <taxon>Clostridiaceae</taxon>
        <taxon>Clostridium</taxon>
    </lineage>
</organism>
<dbReference type="EMBL" id="CP000246">
    <property type="protein sequence ID" value="ABG83895.1"/>
    <property type="molecule type" value="Genomic_DNA"/>
</dbReference>
<dbReference type="RefSeq" id="WP_003451649.1">
    <property type="nucleotide sequence ID" value="NC_008261.1"/>
</dbReference>
<dbReference type="SMR" id="Q0TPC2"/>
<dbReference type="STRING" id="195103.CPF_2089"/>
<dbReference type="PaxDb" id="195103-CPF_2089"/>
<dbReference type="GeneID" id="93001630"/>
<dbReference type="KEGG" id="cpf:CPF_2089"/>
<dbReference type="eggNOG" id="COG0231">
    <property type="taxonomic scope" value="Bacteria"/>
</dbReference>
<dbReference type="HOGENOM" id="CLU_074944_0_1_9"/>
<dbReference type="UniPathway" id="UPA00345"/>
<dbReference type="Proteomes" id="UP000001823">
    <property type="component" value="Chromosome"/>
</dbReference>
<dbReference type="GO" id="GO:0005737">
    <property type="term" value="C:cytoplasm"/>
    <property type="evidence" value="ECO:0007669"/>
    <property type="project" value="UniProtKB-SubCell"/>
</dbReference>
<dbReference type="GO" id="GO:0003746">
    <property type="term" value="F:translation elongation factor activity"/>
    <property type="evidence" value="ECO:0007669"/>
    <property type="project" value="UniProtKB-UniRule"/>
</dbReference>
<dbReference type="GO" id="GO:0043043">
    <property type="term" value="P:peptide biosynthetic process"/>
    <property type="evidence" value="ECO:0007669"/>
    <property type="project" value="InterPro"/>
</dbReference>
<dbReference type="CDD" id="cd04470">
    <property type="entry name" value="S1_EF-P_repeat_1"/>
    <property type="match status" value="1"/>
</dbReference>
<dbReference type="CDD" id="cd05794">
    <property type="entry name" value="S1_EF-P_repeat_2"/>
    <property type="match status" value="1"/>
</dbReference>
<dbReference type="FunFam" id="2.30.30.30:FF:000003">
    <property type="entry name" value="Elongation factor P"/>
    <property type="match status" value="1"/>
</dbReference>
<dbReference type="FunFam" id="2.40.50.140:FF:000004">
    <property type="entry name" value="Elongation factor P"/>
    <property type="match status" value="1"/>
</dbReference>
<dbReference type="FunFam" id="2.40.50.140:FF:000009">
    <property type="entry name" value="Elongation factor P"/>
    <property type="match status" value="1"/>
</dbReference>
<dbReference type="Gene3D" id="2.30.30.30">
    <property type="match status" value="1"/>
</dbReference>
<dbReference type="Gene3D" id="2.40.50.140">
    <property type="entry name" value="Nucleic acid-binding proteins"/>
    <property type="match status" value="2"/>
</dbReference>
<dbReference type="HAMAP" id="MF_00141">
    <property type="entry name" value="EF_P"/>
    <property type="match status" value="1"/>
</dbReference>
<dbReference type="InterPro" id="IPR015365">
    <property type="entry name" value="Elong-fact-P_C"/>
</dbReference>
<dbReference type="InterPro" id="IPR012340">
    <property type="entry name" value="NA-bd_OB-fold"/>
</dbReference>
<dbReference type="InterPro" id="IPR014722">
    <property type="entry name" value="Rib_uL2_dom2"/>
</dbReference>
<dbReference type="InterPro" id="IPR020599">
    <property type="entry name" value="Transl_elong_fac_P/YeiP"/>
</dbReference>
<dbReference type="InterPro" id="IPR013185">
    <property type="entry name" value="Transl_elong_KOW-like"/>
</dbReference>
<dbReference type="InterPro" id="IPR001059">
    <property type="entry name" value="Transl_elong_P/YeiP_cen"/>
</dbReference>
<dbReference type="InterPro" id="IPR013852">
    <property type="entry name" value="Transl_elong_P/YeiP_CS"/>
</dbReference>
<dbReference type="InterPro" id="IPR011768">
    <property type="entry name" value="Transl_elongation_fac_P"/>
</dbReference>
<dbReference type="InterPro" id="IPR008991">
    <property type="entry name" value="Translation_prot_SH3-like_sf"/>
</dbReference>
<dbReference type="NCBIfam" id="TIGR00038">
    <property type="entry name" value="efp"/>
    <property type="match status" value="1"/>
</dbReference>
<dbReference type="NCBIfam" id="NF001810">
    <property type="entry name" value="PRK00529.1"/>
    <property type="match status" value="1"/>
</dbReference>
<dbReference type="PANTHER" id="PTHR30053">
    <property type="entry name" value="ELONGATION FACTOR P"/>
    <property type="match status" value="1"/>
</dbReference>
<dbReference type="PANTHER" id="PTHR30053:SF12">
    <property type="entry name" value="ELONGATION FACTOR P (EF-P) FAMILY PROTEIN"/>
    <property type="match status" value="1"/>
</dbReference>
<dbReference type="Pfam" id="PF01132">
    <property type="entry name" value="EFP"/>
    <property type="match status" value="1"/>
</dbReference>
<dbReference type="Pfam" id="PF08207">
    <property type="entry name" value="EFP_N"/>
    <property type="match status" value="1"/>
</dbReference>
<dbReference type="Pfam" id="PF09285">
    <property type="entry name" value="Elong-fact-P_C"/>
    <property type="match status" value="1"/>
</dbReference>
<dbReference type="PIRSF" id="PIRSF005901">
    <property type="entry name" value="EF-P"/>
    <property type="match status" value="1"/>
</dbReference>
<dbReference type="SMART" id="SM01185">
    <property type="entry name" value="EFP"/>
    <property type="match status" value="1"/>
</dbReference>
<dbReference type="SMART" id="SM00841">
    <property type="entry name" value="Elong-fact-P_C"/>
    <property type="match status" value="1"/>
</dbReference>
<dbReference type="SUPFAM" id="SSF50249">
    <property type="entry name" value="Nucleic acid-binding proteins"/>
    <property type="match status" value="2"/>
</dbReference>
<dbReference type="SUPFAM" id="SSF50104">
    <property type="entry name" value="Translation proteins SH3-like domain"/>
    <property type="match status" value="1"/>
</dbReference>
<dbReference type="PROSITE" id="PS01275">
    <property type="entry name" value="EFP"/>
    <property type="match status" value="1"/>
</dbReference>
<keyword id="KW-0963">Cytoplasm</keyword>
<keyword id="KW-0251">Elongation factor</keyword>
<keyword id="KW-0648">Protein biosynthesis</keyword>
<gene>
    <name evidence="1" type="primary">efp</name>
    <name type="ordered locus">CPF_2089</name>
</gene>
<accession>Q0TPC2</accession>
<evidence type="ECO:0000255" key="1">
    <source>
        <dbReference type="HAMAP-Rule" id="MF_00141"/>
    </source>
</evidence>
<name>EFP_CLOP1</name>